<comment type="function">
    <text evidence="1">Carrier of the growing fatty acid chain in fatty acid biosynthesis.</text>
</comment>
<comment type="pathway">
    <text evidence="1">Lipid metabolism; fatty acid biosynthesis.</text>
</comment>
<comment type="subcellular location">
    <subcellularLocation>
        <location evidence="1">Cytoplasm</location>
    </subcellularLocation>
</comment>
<comment type="PTM">
    <text evidence="1">4'-phosphopantetheine is transferred from CoA to a specific serine of apo-ACP by AcpS. This modification is essential for activity because fatty acids are bound in thioester linkage to the sulfhydryl of the prosthetic group.</text>
</comment>
<comment type="similarity">
    <text evidence="1">Belongs to the acyl carrier protein (ACP) family.</text>
</comment>
<reference key="1">
    <citation type="journal article" date="2000" name="Nature">
        <title>Complete DNA sequence of a serogroup A strain of Neisseria meningitidis Z2491.</title>
        <authorList>
            <person name="Parkhill J."/>
            <person name="Achtman M."/>
            <person name="James K.D."/>
            <person name="Bentley S.D."/>
            <person name="Churcher C.M."/>
            <person name="Klee S.R."/>
            <person name="Morelli G."/>
            <person name="Basham D."/>
            <person name="Brown D."/>
            <person name="Chillingworth T."/>
            <person name="Davies R.M."/>
            <person name="Davis P."/>
            <person name="Devlin K."/>
            <person name="Feltwell T."/>
            <person name="Hamlin N."/>
            <person name="Holroyd S."/>
            <person name="Jagels K."/>
            <person name="Leather S."/>
            <person name="Moule S."/>
            <person name="Mungall K.L."/>
            <person name="Quail M.A."/>
            <person name="Rajandream M.A."/>
            <person name="Rutherford K.M."/>
            <person name="Simmonds M."/>
            <person name="Skelton J."/>
            <person name="Whitehead S."/>
            <person name="Spratt B.G."/>
            <person name="Barrell B.G."/>
        </authorList>
    </citation>
    <scope>NUCLEOTIDE SEQUENCE [LARGE SCALE GENOMIC DNA]</scope>
    <source>
        <strain>DSM 15465 / Z2491</strain>
    </source>
</reference>
<feature type="chain" id="PRO_0000180156" description="Acyl carrier protein">
    <location>
        <begin position="1"/>
        <end position="78"/>
    </location>
</feature>
<feature type="domain" description="Carrier" evidence="2">
    <location>
        <begin position="2"/>
        <end position="77"/>
    </location>
</feature>
<feature type="modified residue" description="O-(pantetheine 4'-phosphoryl)serine" evidence="2">
    <location>
        <position position="37"/>
    </location>
</feature>
<sequence length="78" mass="8511">MSNIEQQVKKIVAEQLGVNEADVKNESSFQDDLGADSLDTVELVMALEEAFGCEIPDEDAEKITTVQLAIDYINAHNG</sequence>
<name>ACP_NEIMA</name>
<organism>
    <name type="scientific">Neisseria meningitidis serogroup A / serotype 4A (strain DSM 15465 / Z2491)</name>
    <dbReference type="NCBI Taxonomy" id="122587"/>
    <lineage>
        <taxon>Bacteria</taxon>
        <taxon>Pseudomonadati</taxon>
        <taxon>Pseudomonadota</taxon>
        <taxon>Betaproteobacteria</taxon>
        <taxon>Neisseriales</taxon>
        <taxon>Neisseriaceae</taxon>
        <taxon>Neisseria</taxon>
    </lineage>
</organism>
<dbReference type="EMBL" id="AL157959">
    <property type="protein sequence ID" value="CAM07367.1"/>
    <property type="molecule type" value="Genomic_DNA"/>
</dbReference>
<dbReference type="RefSeq" id="WP_002215574.1">
    <property type="nucleotide sequence ID" value="NC_003116.1"/>
</dbReference>
<dbReference type="SMR" id="P63441"/>
<dbReference type="EnsemblBacteria" id="CAM07367">
    <property type="protein sequence ID" value="CAM07367"/>
    <property type="gene ID" value="NMA0043"/>
</dbReference>
<dbReference type="GeneID" id="93387307"/>
<dbReference type="KEGG" id="nma:NMA0043"/>
<dbReference type="HOGENOM" id="CLU_108696_5_1_4"/>
<dbReference type="UniPathway" id="UPA00094"/>
<dbReference type="Proteomes" id="UP000000626">
    <property type="component" value="Chromosome"/>
</dbReference>
<dbReference type="GO" id="GO:0005829">
    <property type="term" value="C:cytosol"/>
    <property type="evidence" value="ECO:0007669"/>
    <property type="project" value="TreeGrafter"/>
</dbReference>
<dbReference type="GO" id="GO:0016020">
    <property type="term" value="C:membrane"/>
    <property type="evidence" value="ECO:0007669"/>
    <property type="project" value="GOC"/>
</dbReference>
<dbReference type="GO" id="GO:0000035">
    <property type="term" value="F:acyl binding"/>
    <property type="evidence" value="ECO:0007669"/>
    <property type="project" value="TreeGrafter"/>
</dbReference>
<dbReference type="GO" id="GO:0000036">
    <property type="term" value="F:acyl carrier activity"/>
    <property type="evidence" value="ECO:0007669"/>
    <property type="project" value="UniProtKB-UniRule"/>
</dbReference>
<dbReference type="GO" id="GO:0009245">
    <property type="term" value="P:lipid A biosynthetic process"/>
    <property type="evidence" value="ECO:0007669"/>
    <property type="project" value="TreeGrafter"/>
</dbReference>
<dbReference type="FunFam" id="1.10.1200.10:FF:000001">
    <property type="entry name" value="Acyl carrier protein"/>
    <property type="match status" value="1"/>
</dbReference>
<dbReference type="Gene3D" id="1.10.1200.10">
    <property type="entry name" value="ACP-like"/>
    <property type="match status" value="1"/>
</dbReference>
<dbReference type="HAMAP" id="MF_01217">
    <property type="entry name" value="Acyl_carrier"/>
    <property type="match status" value="1"/>
</dbReference>
<dbReference type="InterPro" id="IPR003231">
    <property type="entry name" value="ACP"/>
</dbReference>
<dbReference type="InterPro" id="IPR036736">
    <property type="entry name" value="ACP-like_sf"/>
</dbReference>
<dbReference type="InterPro" id="IPR009081">
    <property type="entry name" value="PP-bd_ACP"/>
</dbReference>
<dbReference type="InterPro" id="IPR006162">
    <property type="entry name" value="Ppantetheine_attach_site"/>
</dbReference>
<dbReference type="NCBIfam" id="TIGR00517">
    <property type="entry name" value="acyl_carrier"/>
    <property type="match status" value="1"/>
</dbReference>
<dbReference type="NCBIfam" id="NF002148">
    <property type="entry name" value="PRK00982.1-2"/>
    <property type="match status" value="1"/>
</dbReference>
<dbReference type="NCBIfam" id="NF002149">
    <property type="entry name" value="PRK00982.1-3"/>
    <property type="match status" value="1"/>
</dbReference>
<dbReference type="NCBIfam" id="NF002150">
    <property type="entry name" value="PRK00982.1-4"/>
    <property type="match status" value="1"/>
</dbReference>
<dbReference type="NCBIfam" id="NF002151">
    <property type="entry name" value="PRK00982.1-5"/>
    <property type="match status" value="1"/>
</dbReference>
<dbReference type="PANTHER" id="PTHR20863">
    <property type="entry name" value="ACYL CARRIER PROTEIN"/>
    <property type="match status" value="1"/>
</dbReference>
<dbReference type="PANTHER" id="PTHR20863:SF76">
    <property type="entry name" value="CARRIER DOMAIN-CONTAINING PROTEIN"/>
    <property type="match status" value="1"/>
</dbReference>
<dbReference type="Pfam" id="PF00550">
    <property type="entry name" value="PP-binding"/>
    <property type="match status" value="1"/>
</dbReference>
<dbReference type="SUPFAM" id="SSF47336">
    <property type="entry name" value="ACP-like"/>
    <property type="match status" value="1"/>
</dbReference>
<dbReference type="PROSITE" id="PS50075">
    <property type="entry name" value="CARRIER"/>
    <property type="match status" value="1"/>
</dbReference>
<dbReference type="PROSITE" id="PS00012">
    <property type="entry name" value="PHOSPHOPANTETHEINE"/>
    <property type="match status" value="1"/>
</dbReference>
<evidence type="ECO:0000255" key="1">
    <source>
        <dbReference type="HAMAP-Rule" id="MF_01217"/>
    </source>
</evidence>
<evidence type="ECO:0000255" key="2">
    <source>
        <dbReference type="PROSITE-ProRule" id="PRU00258"/>
    </source>
</evidence>
<accession>P63441</accession>
<accession>A1INR0</accession>
<accession>Q9JR72</accession>
<gene>
    <name evidence="1" type="primary">acpP</name>
    <name type="ordered locus">NMA0043</name>
</gene>
<keyword id="KW-0963">Cytoplasm</keyword>
<keyword id="KW-0275">Fatty acid biosynthesis</keyword>
<keyword id="KW-0276">Fatty acid metabolism</keyword>
<keyword id="KW-0444">Lipid biosynthesis</keyword>
<keyword id="KW-0443">Lipid metabolism</keyword>
<keyword id="KW-0596">Phosphopantetheine</keyword>
<keyword id="KW-0597">Phosphoprotein</keyword>
<proteinExistence type="inferred from homology"/>
<protein>
    <recommendedName>
        <fullName evidence="1">Acyl carrier protein</fullName>
        <shortName evidence="1">ACP</shortName>
    </recommendedName>
</protein>